<sequence length="111" mass="13073">METTKPSFQDVLEFVRLFRRKNKLQREIQDIEKKIRDNQKRVLLLDNLSDYIKPGMSVEAIQGIIASMKSDYEDRVDDYIIKNAEISKERRDISKKLKAMGEMKHADVKAE</sequence>
<name>TMAR_SALTI</name>
<keyword id="KW-0175">Coiled coil</keyword>
<keyword id="KW-0963">Cytoplasm</keyword>
<reference key="1">
    <citation type="journal article" date="2001" name="Nature">
        <title>Complete genome sequence of a multiple drug resistant Salmonella enterica serovar Typhi CT18.</title>
        <authorList>
            <person name="Parkhill J."/>
            <person name="Dougan G."/>
            <person name="James K.D."/>
            <person name="Thomson N.R."/>
            <person name="Pickard D."/>
            <person name="Wain J."/>
            <person name="Churcher C.M."/>
            <person name="Mungall K.L."/>
            <person name="Bentley S.D."/>
            <person name="Holden M.T.G."/>
            <person name="Sebaihia M."/>
            <person name="Baker S."/>
            <person name="Basham D."/>
            <person name="Brooks K."/>
            <person name="Chillingworth T."/>
            <person name="Connerton P."/>
            <person name="Cronin A."/>
            <person name="Davis P."/>
            <person name="Davies R.M."/>
            <person name="Dowd L."/>
            <person name="White N."/>
            <person name="Farrar J."/>
            <person name="Feltwell T."/>
            <person name="Hamlin N."/>
            <person name="Haque A."/>
            <person name="Hien T.T."/>
            <person name="Holroyd S."/>
            <person name="Jagels K."/>
            <person name="Krogh A."/>
            <person name="Larsen T.S."/>
            <person name="Leather S."/>
            <person name="Moule S."/>
            <person name="O'Gaora P."/>
            <person name="Parry C."/>
            <person name="Quail M.A."/>
            <person name="Rutherford K.M."/>
            <person name="Simmonds M."/>
            <person name="Skelton J."/>
            <person name="Stevens K."/>
            <person name="Whitehead S."/>
            <person name="Barrell B.G."/>
        </authorList>
    </citation>
    <scope>NUCLEOTIDE SEQUENCE [LARGE SCALE GENOMIC DNA]</scope>
    <source>
        <strain>CT18</strain>
    </source>
</reference>
<reference key="2">
    <citation type="journal article" date="2003" name="J. Bacteriol.">
        <title>Comparative genomics of Salmonella enterica serovar Typhi strains Ty2 and CT18.</title>
        <authorList>
            <person name="Deng W."/>
            <person name="Liou S.-R."/>
            <person name="Plunkett G. III"/>
            <person name="Mayhew G.F."/>
            <person name="Rose D.J."/>
            <person name="Burland V."/>
            <person name="Kodoyianni V."/>
            <person name="Schwartz D.C."/>
            <person name="Blattner F.R."/>
        </authorList>
    </citation>
    <scope>NUCLEOTIDE SEQUENCE [LARGE SCALE GENOMIC DNA]</scope>
    <source>
        <strain>ATCC 700931 / Ty2</strain>
    </source>
</reference>
<protein>
    <recommendedName>
        <fullName evidence="1">Pole-localizer protein TmaR</fullName>
    </recommendedName>
</protein>
<dbReference type="EMBL" id="AE014613">
    <property type="protein sequence ID" value="AAO68504.1"/>
    <property type="molecule type" value="Genomic_DNA"/>
</dbReference>
<dbReference type="EMBL" id="AL513382">
    <property type="protein sequence ID" value="CAD02420.1"/>
    <property type="molecule type" value="Genomic_DNA"/>
</dbReference>
<dbReference type="RefSeq" id="NP_456608.1">
    <property type="nucleotide sequence ID" value="NC_003198.1"/>
</dbReference>
<dbReference type="RefSeq" id="WP_000450405.1">
    <property type="nucleotide sequence ID" value="NZ_WSUR01000002.1"/>
</dbReference>
<dbReference type="SMR" id="P67606"/>
<dbReference type="STRING" id="220341.gene:17586175"/>
<dbReference type="KEGG" id="stt:t0815"/>
<dbReference type="KEGG" id="sty:STY2264"/>
<dbReference type="PATRIC" id="fig|220341.7.peg.2283"/>
<dbReference type="eggNOG" id="COG2926">
    <property type="taxonomic scope" value="Bacteria"/>
</dbReference>
<dbReference type="HOGENOM" id="CLU_153146_0_0_6"/>
<dbReference type="OMA" id="ENMRDDY"/>
<dbReference type="OrthoDB" id="90485at2"/>
<dbReference type="Proteomes" id="UP000000541">
    <property type="component" value="Chromosome"/>
</dbReference>
<dbReference type="Proteomes" id="UP000002670">
    <property type="component" value="Chromosome"/>
</dbReference>
<dbReference type="GO" id="GO:0005829">
    <property type="term" value="C:cytosol"/>
    <property type="evidence" value="ECO:0007669"/>
    <property type="project" value="TreeGrafter"/>
</dbReference>
<dbReference type="HAMAP" id="MF_00683">
    <property type="entry name" value="Pole_loc_TmaR"/>
    <property type="match status" value="1"/>
</dbReference>
<dbReference type="InterPro" id="IPR007458">
    <property type="entry name" value="DUF496"/>
</dbReference>
<dbReference type="InterPro" id="IPR053375">
    <property type="entry name" value="UPF0265"/>
</dbReference>
<dbReference type="NCBIfam" id="NF003844">
    <property type="entry name" value="PRK05423.1"/>
    <property type="match status" value="1"/>
</dbReference>
<dbReference type="NCBIfam" id="NF040881">
    <property type="entry name" value="PTS_reg_TmaR"/>
    <property type="match status" value="1"/>
</dbReference>
<dbReference type="PANTHER" id="PTHR39591">
    <property type="entry name" value="UPF0265 PROTEIN YEEX"/>
    <property type="match status" value="1"/>
</dbReference>
<dbReference type="PANTHER" id="PTHR39591:SF1">
    <property type="entry name" value="UPF0265 PROTEIN YEEX"/>
    <property type="match status" value="1"/>
</dbReference>
<dbReference type="Pfam" id="PF04363">
    <property type="entry name" value="DUF496"/>
    <property type="match status" value="1"/>
</dbReference>
<dbReference type="PIRSF" id="PIRSF028773">
    <property type="entry name" value="UCP028773"/>
    <property type="match status" value="1"/>
</dbReference>
<organism>
    <name type="scientific">Salmonella typhi</name>
    <dbReference type="NCBI Taxonomy" id="90370"/>
    <lineage>
        <taxon>Bacteria</taxon>
        <taxon>Pseudomonadati</taxon>
        <taxon>Pseudomonadota</taxon>
        <taxon>Gammaproteobacteria</taxon>
        <taxon>Enterobacterales</taxon>
        <taxon>Enterobacteriaceae</taxon>
        <taxon>Salmonella</taxon>
    </lineage>
</organism>
<proteinExistence type="inferred from homology"/>
<gene>
    <name evidence="1" type="primary">tmaR</name>
    <name type="ordered locus">STY2264</name>
    <name type="ordered locus">t0815</name>
</gene>
<feature type="chain" id="PRO_0000072767" description="Pole-localizer protein TmaR">
    <location>
        <begin position="1"/>
        <end position="111"/>
    </location>
</feature>
<feature type="coiled-coil region" evidence="1">
    <location>
        <begin position="14"/>
        <end position="41"/>
    </location>
</feature>
<comment type="function">
    <text evidence="1">Pole-localizer protein involved in the regulation of several cellular processes.</text>
</comment>
<comment type="subcellular location">
    <subcellularLocation>
        <location evidence="1">Cytoplasm</location>
    </subcellularLocation>
    <text evidence="1">Forms clusters that localize mainly near one pole of the cell.</text>
</comment>
<comment type="similarity">
    <text evidence="1">Belongs to the pole-localizer TmaR family.</text>
</comment>
<evidence type="ECO:0000255" key="1">
    <source>
        <dbReference type="HAMAP-Rule" id="MF_00683"/>
    </source>
</evidence>
<accession>P67606</accession>
<accession>Q8XFP3</accession>